<evidence type="ECO:0000250" key="1"/>
<evidence type="ECO:0000255" key="2">
    <source>
        <dbReference type="HAMAP-Rule" id="MF_00138"/>
    </source>
</evidence>
<name>PUR2_STRSU</name>
<gene>
    <name evidence="2" type="primary">purD</name>
</gene>
<comment type="catalytic activity">
    <reaction evidence="2">
        <text>5-phospho-beta-D-ribosylamine + glycine + ATP = N(1)-(5-phospho-beta-D-ribosyl)glycinamide + ADP + phosphate + H(+)</text>
        <dbReference type="Rhea" id="RHEA:17453"/>
        <dbReference type="ChEBI" id="CHEBI:15378"/>
        <dbReference type="ChEBI" id="CHEBI:30616"/>
        <dbReference type="ChEBI" id="CHEBI:43474"/>
        <dbReference type="ChEBI" id="CHEBI:57305"/>
        <dbReference type="ChEBI" id="CHEBI:58681"/>
        <dbReference type="ChEBI" id="CHEBI:143788"/>
        <dbReference type="ChEBI" id="CHEBI:456216"/>
        <dbReference type="EC" id="6.3.4.13"/>
    </reaction>
</comment>
<comment type="cofactor">
    <cofactor evidence="1">
        <name>Mg(2+)</name>
        <dbReference type="ChEBI" id="CHEBI:18420"/>
    </cofactor>
    <cofactor evidence="1">
        <name>Mn(2+)</name>
        <dbReference type="ChEBI" id="CHEBI:29035"/>
    </cofactor>
    <text evidence="1">Binds 1 Mg(2+) or Mn(2+) ion per subunit.</text>
</comment>
<comment type="pathway">
    <text evidence="2">Purine metabolism; IMP biosynthesis via de novo pathway; N(1)-(5-phospho-D-ribosyl)glycinamide from 5-phospho-alpha-D-ribose 1-diphosphate: step 2/2.</text>
</comment>
<comment type="similarity">
    <text evidence="2">Belongs to the GARS family.</text>
</comment>
<proteinExistence type="inferred from homology"/>
<accession>Q9F1S9</accession>
<reference key="1">
    <citation type="journal article" date="2001" name="J. Bacteriol.">
        <title>Evidence for horizontal transfer of the SsuDAT1I restriction-modification genes to the Streptococcus suis genome.</title>
        <authorList>
            <person name="Sekizaki T."/>
            <person name="Otani Y."/>
            <person name="Osaki M."/>
            <person name="Takamatsu D."/>
            <person name="Shimoji Y."/>
        </authorList>
    </citation>
    <scope>NUCLEOTIDE SEQUENCE [GENOMIC DNA]</scope>
    <source>
        <strain>DAT1 / Serotype 2</strain>
    </source>
</reference>
<protein>
    <recommendedName>
        <fullName evidence="2">Phosphoribosylamine--glycine ligase</fullName>
        <ecNumber evidence="2">6.3.4.13</ecNumber>
    </recommendedName>
    <alternativeName>
        <fullName evidence="2">GARS</fullName>
    </alternativeName>
    <alternativeName>
        <fullName evidence="2">Glycinamide ribonucleotide synthetase</fullName>
    </alternativeName>
    <alternativeName>
        <fullName evidence="2">Phosphoribosylglycinamide synthetase</fullName>
    </alternativeName>
</protein>
<sequence>MKLLVVGSGGREHAIAKKLLESEQVEQVFVAPGNDGMTLDGIELINIGISEHSALINFAKENDIAWTFVGPDDALAAGIVDDFEQAGLKAFGPSRLAAELEWSKDFAKQIMVKYGIPTAAFGTFSNFEEAKAYIEEQGAPIVVKADGLALGKGVVVAETVEQAVEAAREMLLDNKFGDSGARVVIEEFLAGEEFSLFALVNGDQFYILPTAQDHKRAFDGDQGPNTGGMGAYVHVPHLPQSVVDTAVDTIVKPILEGMITEGRSYLGVLYAGLILTDQGPKVIEFNARFGDPETQIILPRLTSDFAQNIDDILHKRPTQLTWLNSGVTLGVVVASNGYPLDYEKGVTLPAKTEGDITTYYAGARFAENSRALLSNGGRVYMLVTTADTVQDAQEKIYSELKNQDTTGLFYRTDIGSKAVK</sequence>
<organism>
    <name type="scientific">Streptococcus suis</name>
    <dbReference type="NCBI Taxonomy" id="1307"/>
    <lineage>
        <taxon>Bacteria</taxon>
        <taxon>Bacillati</taxon>
        <taxon>Bacillota</taxon>
        <taxon>Bacilli</taxon>
        <taxon>Lactobacillales</taxon>
        <taxon>Streptococcaceae</taxon>
        <taxon>Streptococcus</taxon>
    </lineage>
</organism>
<feature type="chain" id="PRO_0000151493" description="Phosphoribosylamine--glycine ligase">
    <location>
        <begin position="1"/>
        <end position="420"/>
    </location>
</feature>
<feature type="domain" description="ATP-grasp" evidence="2">
    <location>
        <begin position="108"/>
        <end position="314"/>
    </location>
</feature>
<feature type="binding site" evidence="2">
    <location>
        <begin position="134"/>
        <end position="195"/>
    </location>
    <ligand>
        <name>ATP</name>
        <dbReference type="ChEBI" id="CHEBI:30616"/>
    </ligand>
</feature>
<feature type="binding site" evidence="2">
    <location>
        <position position="284"/>
    </location>
    <ligand>
        <name>Mg(2+)</name>
        <dbReference type="ChEBI" id="CHEBI:18420"/>
    </ligand>
</feature>
<feature type="binding site" evidence="2">
    <location>
        <position position="286"/>
    </location>
    <ligand>
        <name>Mg(2+)</name>
        <dbReference type="ChEBI" id="CHEBI:18420"/>
    </ligand>
</feature>
<keyword id="KW-0067">ATP-binding</keyword>
<keyword id="KW-0436">Ligase</keyword>
<keyword id="KW-0460">Magnesium</keyword>
<keyword id="KW-0464">Manganese</keyword>
<keyword id="KW-0479">Metal-binding</keyword>
<keyword id="KW-0547">Nucleotide-binding</keyword>
<keyword id="KW-0658">Purine biosynthesis</keyword>
<dbReference type="EC" id="6.3.4.13" evidence="2"/>
<dbReference type="EMBL" id="AB045609">
    <property type="protein sequence ID" value="BAB20832.1"/>
    <property type="molecule type" value="Genomic_DNA"/>
</dbReference>
<dbReference type="SMR" id="Q9F1S9"/>
<dbReference type="STRING" id="1321372.GCA_000478745_01775"/>
<dbReference type="eggNOG" id="COG0151">
    <property type="taxonomic scope" value="Bacteria"/>
</dbReference>
<dbReference type="UniPathway" id="UPA00074">
    <property type="reaction ID" value="UER00125"/>
</dbReference>
<dbReference type="GO" id="GO:0005524">
    <property type="term" value="F:ATP binding"/>
    <property type="evidence" value="ECO:0007669"/>
    <property type="project" value="UniProtKB-KW"/>
</dbReference>
<dbReference type="GO" id="GO:0046872">
    <property type="term" value="F:metal ion binding"/>
    <property type="evidence" value="ECO:0007669"/>
    <property type="project" value="UniProtKB-KW"/>
</dbReference>
<dbReference type="GO" id="GO:0004637">
    <property type="term" value="F:phosphoribosylamine-glycine ligase activity"/>
    <property type="evidence" value="ECO:0007669"/>
    <property type="project" value="UniProtKB-UniRule"/>
</dbReference>
<dbReference type="GO" id="GO:0006189">
    <property type="term" value="P:'de novo' IMP biosynthetic process"/>
    <property type="evidence" value="ECO:0007669"/>
    <property type="project" value="UniProtKB-UniRule"/>
</dbReference>
<dbReference type="GO" id="GO:0009113">
    <property type="term" value="P:purine nucleobase biosynthetic process"/>
    <property type="evidence" value="ECO:0007669"/>
    <property type="project" value="InterPro"/>
</dbReference>
<dbReference type="FunFam" id="3.30.1490.20:FF:000006">
    <property type="entry name" value="phosphoribosylamine--glycine ligase, chloroplastic-like"/>
    <property type="match status" value="1"/>
</dbReference>
<dbReference type="Gene3D" id="3.40.50.20">
    <property type="match status" value="1"/>
</dbReference>
<dbReference type="Gene3D" id="3.30.1490.20">
    <property type="entry name" value="ATP-grasp fold, A domain"/>
    <property type="match status" value="1"/>
</dbReference>
<dbReference type="Gene3D" id="3.30.470.20">
    <property type="entry name" value="ATP-grasp fold, B domain"/>
    <property type="match status" value="1"/>
</dbReference>
<dbReference type="Gene3D" id="3.90.600.10">
    <property type="entry name" value="Phosphoribosylglycinamide synthetase, C-terminal domain"/>
    <property type="match status" value="1"/>
</dbReference>
<dbReference type="HAMAP" id="MF_00138">
    <property type="entry name" value="GARS"/>
    <property type="match status" value="1"/>
</dbReference>
<dbReference type="InterPro" id="IPR011761">
    <property type="entry name" value="ATP-grasp"/>
</dbReference>
<dbReference type="InterPro" id="IPR013815">
    <property type="entry name" value="ATP_grasp_subdomain_1"/>
</dbReference>
<dbReference type="InterPro" id="IPR016185">
    <property type="entry name" value="PreATP-grasp_dom_sf"/>
</dbReference>
<dbReference type="InterPro" id="IPR020561">
    <property type="entry name" value="PRibGlycinamid_synth_ATP-grasp"/>
</dbReference>
<dbReference type="InterPro" id="IPR000115">
    <property type="entry name" value="PRibGlycinamide_synth"/>
</dbReference>
<dbReference type="InterPro" id="IPR020560">
    <property type="entry name" value="PRibGlycinamide_synth_C-dom"/>
</dbReference>
<dbReference type="InterPro" id="IPR037123">
    <property type="entry name" value="PRibGlycinamide_synth_C_sf"/>
</dbReference>
<dbReference type="InterPro" id="IPR020559">
    <property type="entry name" value="PRibGlycinamide_synth_CS"/>
</dbReference>
<dbReference type="InterPro" id="IPR020562">
    <property type="entry name" value="PRibGlycinamide_synth_N"/>
</dbReference>
<dbReference type="InterPro" id="IPR011054">
    <property type="entry name" value="Rudment_hybrid_motif"/>
</dbReference>
<dbReference type="NCBIfam" id="TIGR00877">
    <property type="entry name" value="purD"/>
    <property type="match status" value="1"/>
</dbReference>
<dbReference type="PANTHER" id="PTHR43472">
    <property type="entry name" value="PHOSPHORIBOSYLAMINE--GLYCINE LIGASE"/>
    <property type="match status" value="1"/>
</dbReference>
<dbReference type="PANTHER" id="PTHR43472:SF1">
    <property type="entry name" value="PHOSPHORIBOSYLAMINE--GLYCINE LIGASE, CHLOROPLASTIC"/>
    <property type="match status" value="1"/>
</dbReference>
<dbReference type="Pfam" id="PF01071">
    <property type="entry name" value="GARS_A"/>
    <property type="match status" value="1"/>
</dbReference>
<dbReference type="Pfam" id="PF02843">
    <property type="entry name" value="GARS_C"/>
    <property type="match status" value="1"/>
</dbReference>
<dbReference type="Pfam" id="PF02844">
    <property type="entry name" value="GARS_N"/>
    <property type="match status" value="1"/>
</dbReference>
<dbReference type="SMART" id="SM01209">
    <property type="entry name" value="GARS_A"/>
    <property type="match status" value="1"/>
</dbReference>
<dbReference type="SMART" id="SM01210">
    <property type="entry name" value="GARS_C"/>
    <property type="match status" value="1"/>
</dbReference>
<dbReference type="SUPFAM" id="SSF56059">
    <property type="entry name" value="Glutathione synthetase ATP-binding domain-like"/>
    <property type="match status" value="1"/>
</dbReference>
<dbReference type="SUPFAM" id="SSF52440">
    <property type="entry name" value="PreATP-grasp domain"/>
    <property type="match status" value="1"/>
</dbReference>
<dbReference type="SUPFAM" id="SSF51246">
    <property type="entry name" value="Rudiment single hybrid motif"/>
    <property type="match status" value="1"/>
</dbReference>
<dbReference type="PROSITE" id="PS50975">
    <property type="entry name" value="ATP_GRASP"/>
    <property type="match status" value="1"/>
</dbReference>
<dbReference type="PROSITE" id="PS00184">
    <property type="entry name" value="GARS"/>
    <property type="match status" value="1"/>
</dbReference>